<proteinExistence type="inferred from homology"/>
<organism>
    <name type="scientific">Escherichia coli (strain UTI89 / UPEC)</name>
    <dbReference type="NCBI Taxonomy" id="364106"/>
    <lineage>
        <taxon>Bacteria</taxon>
        <taxon>Pseudomonadati</taxon>
        <taxon>Pseudomonadota</taxon>
        <taxon>Gammaproteobacteria</taxon>
        <taxon>Enterobacterales</taxon>
        <taxon>Enterobacteriaceae</taxon>
        <taxon>Escherichia</taxon>
    </lineage>
</organism>
<keyword id="KW-0238">DNA-binding</keyword>
<keyword id="KW-0408">Iron</keyword>
<keyword id="KW-0411">Iron-sulfur</keyword>
<keyword id="KW-0479">Metal-binding</keyword>
<keyword id="KW-0678">Repressor</keyword>
<keyword id="KW-0804">Transcription</keyword>
<keyword id="KW-0805">Transcription regulation</keyword>
<evidence type="ECO:0000255" key="1">
    <source>
        <dbReference type="HAMAP-Rule" id="MF_01586"/>
    </source>
</evidence>
<sequence>MASLIQVRDLLALRGRMEAAQISQTLNTPQPMINAMLKQLESMGKAVRIQEEPDGCLSGSCKSCPEGKACLHEWWALR</sequence>
<reference key="1">
    <citation type="journal article" date="2006" name="Proc. Natl. Acad. Sci. U.S.A.">
        <title>Identification of genes subject to positive selection in uropathogenic strains of Escherichia coli: a comparative genomics approach.</title>
        <authorList>
            <person name="Chen S.L."/>
            <person name="Hung C.-S."/>
            <person name="Xu J."/>
            <person name="Reigstad C.S."/>
            <person name="Magrini V."/>
            <person name="Sabo A."/>
            <person name="Blasiar D."/>
            <person name="Bieri T."/>
            <person name="Meyer R.R."/>
            <person name="Ozersky P."/>
            <person name="Armstrong J.R."/>
            <person name="Fulton R.S."/>
            <person name="Latreille J.P."/>
            <person name="Spieth J."/>
            <person name="Hooton T.M."/>
            <person name="Mardis E.R."/>
            <person name="Hultgren S.J."/>
            <person name="Gordon J.I."/>
        </authorList>
    </citation>
    <scope>NUCLEOTIDE SEQUENCE [LARGE SCALE GENOMIC DNA]</scope>
    <source>
        <strain>UTI89 / UPEC</strain>
    </source>
</reference>
<dbReference type="EMBL" id="CP000243">
    <property type="protein sequence ID" value="ABE09340.1"/>
    <property type="molecule type" value="Genomic_DNA"/>
</dbReference>
<dbReference type="RefSeq" id="WP_000157585.1">
    <property type="nucleotide sequence ID" value="NZ_CP064825.1"/>
</dbReference>
<dbReference type="SMR" id="Q1R5M4"/>
<dbReference type="KEGG" id="eci:UTI89_C3911"/>
<dbReference type="HOGENOM" id="CLU_189182_0_0_6"/>
<dbReference type="Proteomes" id="UP000001952">
    <property type="component" value="Chromosome"/>
</dbReference>
<dbReference type="GO" id="GO:0003677">
    <property type="term" value="F:DNA binding"/>
    <property type="evidence" value="ECO:0007669"/>
    <property type="project" value="UniProtKB-KW"/>
</dbReference>
<dbReference type="GO" id="GO:0005506">
    <property type="term" value="F:iron ion binding"/>
    <property type="evidence" value="ECO:0007669"/>
    <property type="project" value="UniProtKB-UniRule"/>
</dbReference>
<dbReference type="GO" id="GO:0051536">
    <property type="term" value="F:iron-sulfur cluster binding"/>
    <property type="evidence" value="ECO:0007669"/>
    <property type="project" value="UniProtKB-KW"/>
</dbReference>
<dbReference type="Gene3D" id="1.10.10.10">
    <property type="entry name" value="Winged helix-like DNA-binding domain superfamily/Winged helix DNA-binding domain"/>
    <property type="match status" value="1"/>
</dbReference>
<dbReference type="HAMAP" id="MF_01586">
    <property type="entry name" value="FeoC"/>
    <property type="match status" value="1"/>
</dbReference>
<dbReference type="InterPro" id="IPR023732">
    <property type="entry name" value="FeoC"/>
</dbReference>
<dbReference type="InterPro" id="IPR015102">
    <property type="entry name" value="Tscrpt_reg_HTH_FeoC"/>
</dbReference>
<dbReference type="InterPro" id="IPR036388">
    <property type="entry name" value="WH-like_DNA-bd_sf"/>
</dbReference>
<dbReference type="InterPro" id="IPR036390">
    <property type="entry name" value="WH_DNA-bd_sf"/>
</dbReference>
<dbReference type="NCBIfam" id="NF011960">
    <property type="entry name" value="PRK15431.1"/>
    <property type="match status" value="1"/>
</dbReference>
<dbReference type="Pfam" id="PF09012">
    <property type="entry name" value="FeoC"/>
    <property type="match status" value="1"/>
</dbReference>
<dbReference type="SUPFAM" id="SSF46785">
    <property type="entry name" value="Winged helix' DNA-binding domain"/>
    <property type="match status" value="1"/>
</dbReference>
<comment type="function">
    <text evidence="1">May function as a transcriptional regulator that controls feoABC expression.</text>
</comment>
<comment type="similarity">
    <text evidence="1">Belongs to the FeoC family.</text>
</comment>
<accession>Q1R5M4</accession>
<name>FEOC_ECOUT</name>
<feature type="chain" id="PRO_0000313057" description="Probable [Fe-S]-dependent transcriptional repressor">
    <location>
        <begin position="1"/>
        <end position="78"/>
    </location>
</feature>
<feature type="binding site" evidence="1">
    <location>
        <position position="56"/>
    </location>
    <ligand>
        <name>iron-sulfur cluster</name>
        <dbReference type="ChEBI" id="CHEBI:30408"/>
    </ligand>
</feature>
<feature type="binding site" evidence="1">
    <location>
        <position position="61"/>
    </location>
    <ligand>
        <name>iron-sulfur cluster</name>
        <dbReference type="ChEBI" id="CHEBI:30408"/>
    </ligand>
</feature>
<feature type="binding site" evidence="1">
    <location>
        <position position="64"/>
    </location>
    <ligand>
        <name>iron-sulfur cluster</name>
        <dbReference type="ChEBI" id="CHEBI:30408"/>
    </ligand>
</feature>
<feature type="binding site" evidence="1">
    <location>
        <position position="70"/>
    </location>
    <ligand>
        <name>iron-sulfur cluster</name>
        <dbReference type="ChEBI" id="CHEBI:30408"/>
    </ligand>
</feature>
<gene>
    <name evidence="1" type="primary">feoC</name>
    <name type="ordered locus">UTI89_C3911</name>
</gene>
<protein>
    <recommendedName>
        <fullName evidence="1">Probable [Fe-S]-dependent transcriptional repressor</fullName>
    </recommendedName>
</protein>